<gene>
    <name evidence="1" type="primary">rplL</name>
    <name type="ordered locus">Pnec_0041</name>
</gene>
<keyword id="KW-0687">Ribonucleoprotein</keyword>
<keyword id="KW-0689">Ribosomal protein</keyword>
<protein>
    <recommendedName>
        <fullName evidence="1">Large ribosomal subunit protein bL12</fullName>
    </recommendedName>
    <alternativeName>
        <fullName evidence="3">50S ribosomal protein L7/L12</fullName>
    </alternativeName>
</protein>
<dbReference type="EMBL" id="CP001010">
    <property type="protein sequence ID" value="ACB43369.1"/>
    <property type="molecule type" value="Genomic_DNA"/>
</dbReference>
<dbReference type="SMR" id="B1XSP2"/>
<dbReference type="STRING" id="452638.Pnec_0041"/>
<dbReference type="KEGG" id="pne:Pnec_0041"/>
<dbReference type="eggNOG" id="COG0222">
    <property type="taxonomic scope" value="Bacteria"/>
</dbReference>
<dbReference type="HOGENOM" id="CLU_086499_3_2_4"/>
<dbReference type="OrthoDB" id="9811748at2"/>
<dbReference type="GO" id="GO:0022625">
    <property type="term" value="C:cytosolic large ribosomal subunit"/>
    <property type="evidence" value="ECO:0007669"/>
    <property type="project" value="TreeGrafter"/>
</dbReference>
<dbReference type="GO" id="GO:0003729">
    <property type="term" value="F:mRNA binding"/>
    <property type="evidence" value="ECO:0007669"/>
    <property type="project" value="TreeGrafter"/>
</dbReference>
<dbReference type="GO" id="GO:0003735">
    <property type="term" value="F:structural constituent of ribosome"/>
    <property type="evidence" value="ECO:0007669"/>
    <property type="project" value="InterPro"/>
</dbReference>
<dbReference type="GO" id="GO:0006412">
    <property type="term" value="P:translation"/>
    <property type="evidence" value="ECO:0007669"/>
    <property type="project" value="UniProtKB-UniRule"/>
</dbReference>
<dbReference type="CDD" id="cd00387">
    <property type="entry name" value="Ribosomal_L7_L12"/>
    <property type="match status" value="1"/>
</dbReference>
<dbReference type="FunFam" id="3.30.1390.10:FF:000001">
    <property type="entry name" value="50S ribosomal protein L7/L12"/>
    <property type="match status" value="1"/>
</dbReference>
<dbReference type="Gene3D" id="3.30.1390.10">
    <property type="match status" value="1"/>
</dbReference>
<dbReference type="Gene3D" id="1.20.5.710">
    <property type="entry name" value="Single helix bin"/>
    <property type="match status" value="1"/>
</dbReference>
<dbReference type="HAMAP" id="MF_00368">
    <property type="entry name" value="Ribosomal_bL12"/>
    <property type="match status" value="1"/>
</dbReference>
<dbReference type="InterPro" id="IPR000206">
    <property type="entry name" value="Ribosomal_bL12"/>
</dbReference>
<dbReference type="InterPro" id="IPR013823">
    <property type="entry name" value="Ribosomal_bL12_C"/>
</dbReference>
<dbReference type="InterPro" id="IPR014719">
    <property type="entry name" value="Ribosomal_bL12_C/ClpS-like"/>
</dbReference>
<dbReference type="InterPro" id="IPR008932">
    <property type="entry name" value="Ribosomal_bL12_oligo"/>
</dbReference>
<dbReference type="InterPro" id="IPR036235">
    <property type="entry name" value="Ribosomal_bL12_oligo_N_sf"/>
</dbReference>
<dbReference type="NCBIfam" id="TIGR00855">
    <property type="entry name" value="L12"/>
    <property type="match status" value="1"/>
</dbReference>
<dbReference type="PANTHER" id="PTHR45987">
    <property type="entry name" value="39S RIBOSOMAL PROTEIN L12"/>
    <property type="match status" value="1"/>
</dbReference>
<dbReference type="PANTHER" id="PTHR45987:SF4">
    <property type="entry name" value="LARGE RIBOSOMAL SUBUNIT PROTEIN BL12M"/>
    <property type="match status" value="1"/>
</dbReference>
<dbReference type="Pfam" id="PF00542">
    <property type="entry name" value="Ribosomal_L12"/>
    <property type="match status" value="1"/>
</dbReference>
<dbReference type="Pfam" id="PF16320">
    <property type="entry name" value="Ribosomal_L12_N"/>
    <property type="match status" value="1"/>
</dbReference>
<dbReference type="SUPFAM" id="SSF54736">
    <property type="entry name" value="ClpS-like"/>
    <property type="match status" value="1"/>
</dbReference>
<dbReference type="SUPFAM" id="SSF48300">
    <property type="entry name" value="Ribosomal protein L7/12, oligomerisation (N-terminal) domain"/>
    <property type="match status" value="1"/>
</dbReference>
<proteinExistence type="inferred from homology"/>
<accession>B1XSP2</accession>
<organism>
    <name type="scientific">Polynucleobacter necessarius subsp. necessarius (strain STIR1)</name>
    <dbReference type="NCBI Taxonomy" id="452638"/>
    <lineage>
        <taxon>Bacteria</taxon>
        <taxon>Pseudomonadati</taxon>
        <taxon>Pseudomonadota</taxon>
        <taxon>Betaproteobacteria</taxon>
        <taxon>Burkholderiales</taxon>
        <taxon>Burkholderiaceae</taxon>
        <taxon>Polynucleobacter</taxon>
    </lineage>
</organism>
<sequence>MAITKEEIIEAVGSMSVMDLNDLVKAFEEKFGVSAAAMAVVGPAGAGGGDAGGAEQTEFTVNLVEAGANKVSVIKAVREITGLGLKEAKDLVDGAPKPIKEGVDKKTAEEAKKKLEEAGAKAELK</sequence>
<name>RL7_POLNS</name>
<reference key="1">
    <citation type="journal article" date="2013" name="Proc. Natl. Acad. Sci. U.S.A.">
        <title>Polynucleobacter necessarius, a model for genome reduction in both free-living and symbiotic bacteria.</title>
        <authorList>
            <person name="Boscaro V."/>
            <person name="Felletti M."/>
            <person name="Vannini C."/>
            <person name="Ackerman M.S."/>
            <person name="Chain P.S."/>
            <person name="Malfatti S."/>
            <person name="Vergez L.M."/>
            <person name="Shin M."/>
            <person name="Doak T.G."/>
            <person name="Lynch M."/>
            <person name="Petroni G."/>
        </authorList>
    </citation>
    <scope>NUCLEOTIDE SEQUENCE [LARGE SCALE GENOMIC DNA]</scope>
    <source>
        <strain>STIR1</strain>
    </source>
</reference>
<comment type="function">
    <text evidence="1">Forms part of the ribosomal stalk which helps the ribosome interact with GTP-bound translation factors. Is thus essential for accurate translation.</text>
</comment>
<comment type="subunit">
    <text evidence="1">Homodimer. Part of the ribosomal stalk of the 50S ribosomal subunit. Forms a multimeric L10(L12)X complex, where L10 forms an elongated spine to which 2 to 4 L12 dimers bind in a sequential fashion. Binds GTP-bound translation factors.</text>
</comment>
<comment type="similarity">
    <text evidence="1">Belongs to the bacterial ribosomal protein bL12 family.</text>
</comment>
<evidence type="ECO:0000255" key="1">
    <source>
        <dbReference type="HAMAP-Rule" id="MF_00368"/>
    </source>
</evidence>
<evidence type="ECO:0000256" key="2">
    <source>
        <dbReference type="SAM" id="MobiDB-lite"/>
    </source>
</evidence>
<evidence type="ECO:0000305" key="3"/>
<feature type="chain" id="PRO_1000121469" description="Large ribosomal subunit protein bL12">
    <location>
        <begin position="1"/>
        <end position="125"/>
    </location>
</feature>
<feature type="region of interest" description="Disordered" evidence="2">
    <location>
        <begin position="95"/>
        <end position="125"/>
    </location>
</feature>